<feature type="chain" id="PRO_1000211995" description="Peptidase T">
    <location>
        <begin position="1"/>
        <end position="410"/>
    </location>
</feature>
<feature type="active site" evidence="1">
    <location>
        <position position="80"/>
    </location>
</feature>
<feature type="active site" description="Proton acceptor" evidence="1">
    <location>
        <position position="173"/>
    </location>
</feature>
<feature type="binding site" evidence="1">
    <location>
        <position position="78"/>
    </location>
    <ligand>
        <name>Zn(2+)</name>
        <dbReference type="ChEBI" id="CHEBI:29105"/>
        <label>1</label>
    </ligand>
</feature>
<feature type="binding site" evidence="1">
    <location>
        <position position="140"/>
    </location>
    <ligand>
        <name>Zn(2+)</name>
        <dbReference type="ChEBI" id="CHEBI:29105"/>
        <label>1</label>
    </ligand>
</feature>
<feature type="binding site" evidence="1">
    <location>
        <position position="140"/>
    </location>
    <ligand>
        <name>Zn(2+)</name>
        <dbReference type="ChEBI" id="CHEBI:29105"/>
        <label>2</label>
    </ligand>
</feature>
<feature type="binding site" evidence="1">
    <location>
        <position position="174"/>
    </location>
    <ligand>
        <name>Zn(2+)</name>
        <dbReference type="ChEBI" id="CHEBI:29105"/>
        <label>2</label>
    </ligand>
</feature>
<feature type="binding site" evidence="1">
    <location>
        <position position="196"/>
    </location>
    <ligand>
        <name>Zn(2+)</name>
        <dbReference type="ChEBI" id="CHEBI:29105"/>
        <label>1</label>
    </ligand>
</feature>
<feature type="binding site" evidence="1">
    <location>
        <position position="379"/>
    </location>
    <ligand>
        <name>Zn(2+)</name>
        <dbReference type="ChEBI" id="CHEBI:29105"/>
        <label>2</label>
    </ligand>
</feature>
<evidence type="ECO:0000255" key="1">
    <source>
        <dbReference type="HAMAP-Rule" id="MF_00550"/>
    </source>
</evidence>
<protein>
    <recommendedName>
        <fullName evidence="1">Peptidase T</fullName>
        <ecNumber evidence="1">3.4.11.4</ecNumber>
    </recommendedName>
    <alternativeName>
        <fullName evidence="1">Aminotripeptidase</fullName>
        <shortName evidence="1">Tripeptidase</shortName>
    </alternativeName>
    <alternativeName>
        <fullName evidence="1">Tripeptide aminopeptidase</fullName>
    </alternativeName>
</protein>
<comment type="function">
    <text evidence="1">Cleaves the N-terminal amino acid of tripeptides.</text>
</comment>
<comment type="catalytic activity">
    <reaction evidence="1">
        <text>Release of the N-terminal residue from a tripeptide.</text>
        <dbReference type="EC" id="3.4.11.4"/>
    </reaction>
</comment>
<comment type="cofactor">
    <cofactor evidence="1">
        <name>Zn(2+)</name>
        <dbReference type="ChEBI" id="CHEBI:29105"/>
    </cofactor>
    <text evidence="1">Binds 2 Zn(2+) ions per subunit.</text>
</comment>
<comment type="subcellular location">
    <subcellularLocation>
        <location evidence="1">Cytoplasm</location>
    </subcellularLocation>
</comment>
<comment type="similarity">
    <text evidence="1">Belongs to the peptidase M20B family.</text>
</comment>
<proteinExistence type="inferred from homology"/>
<accession>C6DFW1</accession>
<sequence length="410" mass="45154">MDKLLDRFLNYVSFDTQSKSGVRQVPSTDGQLKLARALQQELLELGFEQVVLSKQGCLMATLPANVAWPVPAIGFISHMDTSPDFSGKNVNPQILENYRGGDIALGVGDEVLSPVMFPVLHQLLGHTLITTDGKTLLGADDKAGIAEIMTALVRLKKSQLPHGDIRVAFTPDEEIGKGAQFFDVKAFNAQWAYTVDGGGVGELEYENFNAASVQVKIVGNNVHPGSAKGVMVNALTLASRYHQQVPESQSPEQTDGYQGFYHLHSMKGSVERADLHYIVRDFDRNGFEQRKQTMLDIAEKVGAGLHPDCYIEVTITDTYYNMREQVEQHPHIIALAQQAMRDCDIEPNMKPIRGGTDGAHLSFQGLPCPNLFTGGYNYHGKHEFVTLEGMEKAVSVIMRIAELTALRAKP</sequence>
<gene>
    <name evidence="1" type="primary">pepT</name>
    <name type="ordered locus">PC1_1863</name>
</gene>
<keyword id="KW-0031">Aminopeptidase</keyword>
<keyword id="KW-0963">Cytoplasm</keyword>
<keyword id="KW-0378">Hydrolase</keyword>
<keyword id="KW-0479">Metal-binding</keyword>
<keyword id="KW-0482">Metalloprotease</keyword>
<keyword id="KW-0645">Protease</keyword>
<keyword id="KW-0862">Zinc</keyword>
<name>PEPT_PECCP</name>
<dbReference type="EC" id="3.4.11.4" evidence="1"/>
<dbReference type="EMBL" id="CP001657">
    <property type="protein sequence ID" value="ACT12904.1"/>
    <property type="molecule type" value="Genomic_DNA"/>
</dbReference>
<dbReference type="RefSeq" id="WP_015840106.1">
    <property type="nucleotide sequence ID" value="NC_012917.1"/>
</dbReference>
<dbReference type="SMR" id="C6DFW1"/>
<dbReference type="STRING" id="561230.PC1_1863"/>
<dbReference type="MEROPS" id="M20.003"/>
<dbReference type="GeneID" id="67793861"/>
<dbReference type="KEGG" id="pct:PC1_1863"/>
<dbReference type="eggNOG" id="COG2195">
    <property type="taxonomic scope" value="Bacteria"/>
</dbReference>
<dbReference type="HOGENOM" id="CLU_053676_0_0_6"/>
<dbReference type="OrthoDB" id="9804934at2"/>
<dbReference type="Proteomes" id="UP000002736">
    <property type="component" value="Chromosome"/>
</dbReference>
<dbReference type="GO" id="GO:0005829">
    <property type="term" value="C:cytosol"/>
    <property type="evidence" value="ECO:0007669"/>
    <property type="project" value="TreeGrafter"/>
</dbReference>
<dbReference type="GO" id="GO:0008237">
    <property type="term" value="F:metallopeptidase activity"/>
    <property type="evidence" value="ECO:0007669"/>
    <property type="project" value="UniProtKB-KW"/>
</dbReference>
<dbReference type="GO" id="GO:0045148">
    <property type="term" value="F:tripeptide aminopeptidase activity"/>
    <property type="evidence" value="ECO:0007669"/>
    <property type="project" value="UniProtKB-UniRule"/>
</dbReference>
<dbReference type="GO" id="GO:0008270">
    <property type="term" value="F:zinc ion binding"/>
    <property type="evidence" value="ECO:0007669"/>
    <property type="project" value="UniProtKB-UniRule"/>
</dbReference>
<dbReference type="GO" id="GO:0043171">
    <property type="term" value="P:peptide catabolic process"/>
    <property type="evidence" value="ECO:0007669"/>
    <property type="project" value="UniProtKB-UniRule"/>
</dbReference>
<dbReference type="GO" id="GO:0006508">
    <property type="term" value="P:proteolysis"/>
    <property type="evidence" value="ECO:0007669"/>
    <property type="project" value="UniProtKB-UniRule"/>
</dbReference>
<dbReference type="CDD" id="cd03892">
    <property type="entry name" value="M20_peptT"/>
    <property type="match status" value="1"/>
</dbReference>
<dbReference type="FunFam" id="3.30.70.360:FF:000002">
    <property type="entry name" value="Peptidase T"/>
    <property type="match status" value="1"/>
</dbReference>
<dbReference type="Gene3D" id="3.30.70.360">
    <property type="match status" value="1"/>
</dbReference>
<dbReference type="Gene3D" id="3.40.630.10">
    <property type="entry name" value="Zn peptidases"/>
    <property type="match status" value="1"/>
</dbReference>
<dbReference type="HAMAP" id="MF_00550">
    <property type="entry name" value="Aminopeptidase_M20"/>
    <property type="match status" value="1"/>
</dbReference>
<dbReference type="InterPro" id="IPR001261">
    <property type="entry name" value="ArgE/DapE_CS"/>
</dbReference>
<dbReference type="InterPro" id="IPR036264">
    <property type="entry name" value="Bact_exopeptidase_dim_dom"/>
</dbReference>
<dbReference type="InterPro" id="IPR002933">
    <property type="entry name" value="Peptidase_M20"/>
</dbReference>
<dbReference type="InterPro" id="IPR011650">
    <property type="entry name" value="Peptidase_M20_dimer"/>
</dbReference>
<dbReference type="InterPro" id="IPR010161">
    <property type="entry name" value="Peptidase_M20B"/>
</dbReference>
<dbReference type="NCBIfam" id="TIGR01882">
    <property type="entry name" value="peptidase-T"/>
    <property type="match status" value="1"/>
</dbReference>
<dbReference type="NCBIfam" id="NF003976">
    <property type="entry name" value="PRK05469.1"/>
    <property type="match status" value="1"/>
</dbReference>
<dbReference type="NCBIfam" id="NF009920">
    <property type="entry name" value="PRK13381.1"/>
    <property type="match status" value="1"/>
</dbReference>
<dbReference type="PANTHER" id="PTHR42994">
    <property type="entry name" value="PEPTIDASE T"/>
    <property type="match status" value="1"/>
</dbReference>
<dbReference type="PANTHER" id="PTHR42994:SF1">
    <property type="entry name" value="PEPTIDASE T"/>
    <property type="match status" value="1"/>
</dbReference>
<dbReference type="Pfam" id="PF07687">
    <property type="entry name" value="M20_dimer"/>
    <property type="match status" value="1"/>
</dbReference>
<dbReference type="Pfam" id="PF01546">
    <property type="entry name" value="Peptidase_M20"/>
    <property type="match status" value="1"/>
</dbReference>
<dbReference type="PIRSF" id="PIRSF037215">
    <property type="entry name" value="Peptidase_M20B"/>
    <property type="match status" value="1"/>
</dbReference>
<dbReference type="SUPFAM" id="SSF55031">
    <property type="entry name" value="Bacterial exopeptidase dimerisation domain"/>
    <property type="match status" value="1"/>
</dbReference>
<dbReference type="SUPFAM" id="SSF53187">
    <property type="entry name" value="Zn-dependent exopeptidases"/>
    <property type="match status" value="1"/>
</dbReference>
<dbReference type="PROSITE" id="PS00758">
    <property type="entry name" value="ARGE_DAPE_CPG2_1"/>
    <property type="match status" value="1"/>
</dbReference>
<dbReference type="PROSITE" id="PS00759">
    <property type="entry name" value="ARGE_DAPE_CPG2_2"/>
    <property type="match status" value="1"/>
</dbReference>
<reference key="1">
    <citation type="submission" date="2009-07" db="EMBL/GenBank/DDBJ databases">
        <title>Complete sequence of Pectobacterium carotovorum subsp. carotovorum PC1.</title>
        <authorList>
            <consortium name="US DOE Joint Genome Institute"/>
            <person name="Lucas S."/>
            <person name="Copeland A."/>
            <person name="Lapidus A."/>
            <person name="Glavina del Rio T."/>
            <person name="Tice H."/>
            <person name="Bruce D."/>
            <person name="Goodwin L."/>
            <person name="Pitluck S."/>
            <person name="Munk A.C."/>
            <person name="Brettin T."/>
            <person name="Detter J.C."/>
            <person name="Han C."/>
            <person name="Tapia R."/>
            <person name="Larimer F."/>
            <person name="Land M."/>
            <person name="Hauser L."/>
            <person name="Kyrpides N."/>
            <person name="Mikhailova N."/>
            <person name="Balakrishnan V."/>
            <person name="Glasner J."/>
            <person name="Perna N.T."/>
        </authorList>
    </citation>
    <scope>NUCLEOTIDE SEQUENCE [LARGE SCALE GENOMIC DNA]</scope>
    <source>
        <strain>PC1</strain>
    </source>
</reference>
<organism>
    <name type="scientific">Pectobacterium carotovorum subsp. carotovorum (strain PC1)</name>
    <dbReference type="NCBI Taxonomy" id="561230"/>
    <lineage>
        <taxon>Bacteria</taxon>
        <taxon>Pseudomonadati</taxon>
        <taxon>Pseudomonadota</taxon>
        <taxon>Gammaproteobacteria</taxon>
        <taxon>Enterobacterales</taxon>
        <taxon>Pectobacteriaceae</taxon>
        <taxon>Pectobacterium</taxon>
    </lineage>
</organism>